<dbReference type="EC" id="7.3.2.1" evidence="1"/>
<dbReference type="EMBL" id="AE017340">
    <property type="protein sequence ID" value="AAV82938.1"/>
    <property type="molecule type" value="Genomic_DNA"/>
</dbReference>
<dbReference type="RefSeq" id="WP_011235334.1">
    <property type="nucleotide sequence ID" value="NC_006512.1"/>
</dbReference>
<dbReference type="SMR" id="Q5QVB0"/>
<dbReference type="STRING" id="283942.IL2106"/>
<dbReference type="GeneID" id="41337295"/>
<dbReference type="KEGG" id="ilo:IL2106"/>
<dbReference type="eggNOG" id="COG1117">
    <property type="taxonomic scope" value="Bacteria"/>
</dbReference>
<dbReference type="HOGENOM" id="CLU_000604_1_22_6"/>
<dbReference type="OrthoDB" id="9802264at2"/>
<dbReference type="Proteomes" id="UP000001171">
    <property type="component" value="Chromosome"/>
</dbReference>
<dbReference type="GO" id="GO:0005886">
    <property type="term" value="C:plasma membrane"/>
    <property type="evidence" value="ECO:0007669"/>
    <property type="project" value="UniProtKB-SubCell"/>
</dbReference>
<dbReference type="GO" id="GO:0005524">
    <property type="term" value="F:ATP binding"/>
    <property type="evidence" value="ECO:0007669"/>
    <property type="project" value="UniProtKB-KW"/>
</dbReference>
<dbReference type="GO" id="GO:0016887">
    <property type="term" value="F:ATP hydrolysis activity"/>
    <property type="evidence" value="ECO:0007669"/>
    <property type="project" value="InterPro"/>
</dbReference>
<dbReference type="GO" id="GO:0015415">
    <property type="term" value="F:ATPase-coupled phosphate ion transmembrane transporter activity"/>
    <property type="evidence" value="ECO:0007669"/>
    <property type="project" value="UniProtKB-EC"/>
</dbReference>
<dbReference type="GO" id="GO:0035435">
    <property type="term" value="P:phosphate ion transmembrane transport"/>
    <property type="evidence" value="ECO:0007669"/>
    <property type="project" value="InterPro"/>
</dbReference>
<dbReference type="CDD" id="cd03260">
    <property type="entry name" value="ABC_PstB_phosphate_transporter"/>
    <property type="match status" value="1"/>
</dbReference>
<dbReference type="FunFam" id="3.40.50.300:FF:000132">
    <property type="entry name" value="Phosphate import ATP-binding protein PstB"/>
    <property type="match status" value="1"/>
</dbReference>
<dbReference type="Gene3D" id="3.40.50.300">
    <property type="entry name" value="P-loop containing nucleotide triphosphate hydrolases"/>
    <property type="match status" value="1"/>
</dbReference>
<dbReference type="InterPro" id="IPR003593">
    <property type="entry name" value="AAA+_ATPase"/>
</dbReference>
<dbReference type="InterPro" id="IPR003439">
    <property type="entry name" value="ABC_transporter-like_ATP-bd"/>
</dbReference>
<dbReference type="InterPro" id="IPR017871">
    <property type="entry name" value="ABC_transporter-like_CS"/>
</dbReference>
<dbReference type="InterPro" id="IPR027417">
    <property type="entry name" value="P-loop_NTPase"/>
</dbReference>
<dbReference type="InterPro" id="IPR005670">
    <property type="entry name" value="PstB-like"/>
</dbReference>
<dbReference type="NCBIfam" id="TIGR00972">
    <property type="entry name" value="3a0107s01c2"/>
    <property type="match status" value="1"/>
</dbReference>
<dbReference type="PANTHER" id="PTHR43423">
    <property type="entry name" value="ABC TRANSPORTER I FAMILY MEMBER 17"/>
    <property type="match status" value="1"/>
</dbReference>
<dbReference type="PANTHER" id="PTHR43423:SF12">
    <property type="entry name" value="IRON EXPORT ATP-BINDING PROTEIN FETA-RELATED"/>
    <property type="match status" value="1"/>
</dbReference>
<dbReference type="Pfam" id="PF00005">
    <property type="entry name" value="ABC_tran"/>
    <property type="match status" value="1"/>
</dbReference>
<dbReference type="SMART" id="SM00382">
    <property type="entry name" value="AAA"/>
    <property type="match status" value="1"/>
</dbReference>
<dbReference type="SUPFAM" id="SSF52540">
    <property type="entry name" value="P-loop containing nucleoside triphosphate hydrolases"/>
    <property type="match status" value="1"/>
</dbReference>
<dbReference type="PROSITE" id="PS00211">
    <property type="entry name" value="ABC_TRANSPORTER_1"/>
    <property type="match status" value="1"/>
</dbReference>
<dbReference type="PROSITE" id="PS50893">
    <property type="entry name" value="ABC_TRANSPORTER_2"/>
    <property type="match status" value="1"/>
</dbReference>
<dbReference type="PROSITE" id="PS51238">
    <property type="entry name" value="PSTB"/>
    <property type="match status" value="1"/>
</dbReference>
<protein>
    <recommendedName>
        <fullName evidence="1">Phosphate import ATP-binding protein PstB</fullName>
        <ecNumber evidence="1">7.3.2.1</ecNumber>
    </recommendedName>
    <alternativeName>
        <fullName evidence="1">ABC phosphate transporter</fullName>
    </alternativeName>
    <alternativeName>
        <fullName evidence="1">Phosphate-transporting ATPase</fullName>
    </alternativeName>
</protein>
<reference key="1">
    <citation type="journal article" date="2004" name="Proc. Natl. Acad. Sci. U.S.A.">
        <title>Genome sequence of the deep-sea gamma-proteobacterium Idiomarina loihiensis reveals amino acid fermentation as a source of carbon and energy.</title>
        <authorList>
            <person name="Hou S."/>
            <person name="Saw J.H."/>
            <person name="Lee K.S."/>
            <person name="Freitas T.A."/>
            <person name="Belisle C."/>
            <person name="Kawarabayasi Y."/>
            <person name="Donachie S.P."/>
            <person name="Pikina A."/>
            <person name="Galperin M.Y."/>
            <person name="Koonin E.V."/>
            <person name="Makarova K.S."/>
            <person name="Omelchenko M.V."/>
            <person name="Sorokin A."/>
            <person name="Wolf Y.I."/>
            <person name="Li Q.X."/>
            <person name="Keum Y.S."/>
            <person name="Campbell S."/>
            <person name="Denery J."/>
            <person name="Aizawa S."/>
            <person name="Shibata S."/>
            <person name="Malahoff A."/>
            <person name="Alam M."/>
        </authorList>
    </citation>
    <scope>NUCLEOTIDE SEQUENCE [LARGE SCALE GENOMIC DNA]</scope>
    <source>
        <strain>ATCC BAA-735 / DSM 15497 / L2-TR</strain>
    </source>
</reference>
<feature type="chain" id="PRO_0000272462" description="Phosphate import ATP-binding protein PstB">
    <location>
        <begin position="1"/>
        <end position="272"/>
    </location>
</feature>
<feature type="domain" description="ABC transporter" evidence="1">
    <location>
        <begin position="26"/>
        <end position="267"/>
    </location>
</feature>
<feature type="binding site" evidence="1">
    <location>
        <begin position="58"/>
        <end position="65"/>
    </location>
    <ligand>
        <name>ATP</name>
        <dbReference type="ChEBI" id="CHEBI:30616"/>
    </ligand>
</feature>
<name>PSTB_IDILO</name>
<evidence type="ECO:0000255" key="1">
    <source>
        <dbReference type="HAMAP-Rule" id="MF_01702"/>
    </source>
</evidence>
<sequence>MISVNPSTSNLEKLDLHNLPAEQTALDIKNLDLYYGEDQALYDISMRIPNNRVTAFIGPSGCGKSTLLRCINRMNDLVEICRIEGQIDMHGHNIYGKNVDVASLRRRVGMVFQRPNPFPKSIYENVVYGLRLQGVKDKRVLDEAVETSLRGAALWDEVKDRLNASAFSLSGGQQQRLVIARSIAIEPEILLLDEPTSALDPISTLTIEELITDLKDKYTVVIVTHNMQQAARVSDQTAFLYMGKLIEYADTDTLFTTPSEKQTEDYITGRYG</sequence>
<comment type="function">
    <text evidence="1">Part of the ABC transporter complex PstSACB involved in phosphate import. Responsible for energy coupling to the transport system.</text>
</comment>
<comment type="catalytic activity">
    <reaction evidence="1">
        <text>phosphate(out) + ATP + H2O = ADP + 2 phosphate(in) + H(+)</text>
        <dbReference type="Rhea" id="RHEA:24440"/>
        <dbReference type="ChEBI" id="CHEBI:15377"/>
        <dbReference type="ChEBI" id="CHEBI:15378"/>
        <dbReference type="ChEBI" id="CHEBI:30616"/>
        <dbReference type="ChEBI" id="CHEBI:43474"/>
        <dbReference type="ChEBI" id="CHEBI:456216"/>
        <dbReference type="EC" id="7.3.2.1"/>
    </reaction>
</comment>
<comment type="subunit">
    <text evidence="1">The complex is composed of two ATP-binding proteins (PstB), two transmembrane proteins (PstC and PstA) and a solute-binding protein (PstS).</text>
</comment>
<comment type="subcellular location">
    <subcellularLocation>
        <location evidence="1">Cell inner membrane</location>
        <topology evidence="1">Peripheral membrane protein</topology>
    </subcellularLocation>
</comment>
<comment type="similarity">
    <text evidence="1">Belongs to the ABC transporter superfamily. Phosphate importer (TC 3.A.1.7) family.</text>
</comment>
<organism>
    <name type="scientific">Idiomarina loihiensis (strain ATCC BAA-735 / DSM 15497 / L2-TR)</name>
    <dbReference type="NCBI Taxonomy" id="283942"/>
    <lineage>
        <taxon>Bacteria</taxon>
        <taxon>Pseudomonadati</taxon>
        <taxon>Pseudomonadota</taxon>
        <taxon>Gammaproteobacteria</taxon>
        <taxon>Alteromonadales</taxon>
        <taxon>Idiomarinaceae</taxon>
        <taxon>Idiomarina</taxon>
    </lineage>
</organism>
<proteinExistence type="inferred from homology"/>
<keyword id="KW-0067">ATP-binding</keyword>
<keyword id="KW-0997">Cell inner membrane</keyword>
<keyword id="KW-1003">Cell membrane</keyword>
<keyword id="KW-0472">Membrane</keyword>
<keyword id="KW-0547">Nucleotide-binding</keyword>
<keyword id="KW-0592">Phosphate transport</keyword>
<keyword id="KW-1185">Reference proteome</keyword>
<keyword id="KW-1278">Translocase</keyword>
<keyword id="KW-0813">Transport</keyword>
<accession>Q5QVB0</accession>
<gene>
    <name evidence="1" type="primary">pstB</name>
    <name type="ordered locus">IL2106</name>
</gene>